<feature type="chain" id="PRO_0000232018" description="Phenylalanine--tRNA ligase alpha subunit">
    <location>
        <begin position="1"/>
        <end position="360"/>
    </location>
</feature>
<feature type="binding site" evidence="1">
    <location>
        <position position="260"/>
    </location>
    <ligand>
        <name>Mg(2+)</name>
        <dbReference type="ChEBI" id="CHEBI:18420"/>
        <note>shared with beta subunit</note>
    </ligand>
</feature>
<gene>
    <name evidence="1" type="primary">pheS</name>
    <name type="ordered locus">RHOS4_03420</name>
    <name type="ORF">RSP_1763</name>
</gene>
<organism>
    <name type="scientific">Cereibacter sphaeroides (strain ATCC 17023 / DSM 158 / JCM 6121 / CCUG 31486 / LMG 2827 / NBRC 12203 / NCIMB 8253 / ATH 2.4.1.)</name>
    <name type="common">Rhodobacter sphaeroides</name>
    <dbReference type="NCBI Taxonomy" id="272943"/>
    <lineage>
        <taxon>Bacteria</taxon>
        <taxon>Pseudomonadati</taxon>
        <taxon>Pseudomonadota</taxon>
        <taxon>Alphaproteobacteria</taxon>
        <taxon>Rhodobacterales</taxon>
        <taxon>Paracoccaceae</taxon>
        <taxon>Cereibacter</taxon>
    </lineage>
</organism>
<dbReference type="EC" id="6.1.1.20" evidence="1"/>
<dbReference type="EMBL" id="CP000143">
    <property type="protein sequence ID" value="ABA77910.1"/>
    <property type="molecule type" value="Genomic_DNA"/>
</dbReference>
<dbReference type="RefSeq" id="WP_002722590.1">
    <property type="nucleotide sequence ID" value="NZ_CP030271.1"/>
</dbReference>
<dbReference type="RefSeq" id="YP_351811.1">
    <property type="nucleotide sequence ID" value="NC_007493.2"/>
</dbReference>
<dbReference type="SMR" id="Q3J5M4"/>
<dbReference type="STRING" id="272943.RSP_1763"/>
<dbReference type="EnsemblBacteria" id="ABA77910">
    <property type="protein sequence ID" value="ABA77910"/>
    <property type="gene ID" value="RSP_1763"/>
</dbReference>
<dbReference type="GeneID" id="3718969"/>
<dbReference type="KEGG" id="rsp:RSP_1763"/>
<dbReference type="PATRIC" id="fig|272943.9.peg.642"/>
<dbReference type="eggNOG" id="COG0016">
    <property type="taxonomic scope" value="Bacteria"/>
</dbReference>
<dbReference type="OrthoDB" id="9800719at2"/>
<dbReference type="PhylomeDB" id="Q3J5M4"/>
<dbReference type="Proteomes" id="UP000002703">
    <property type="component" value="Chromosome 1"/>
</dbReference>
<dbReference type="GO" id="GO:0005737">
    <property type="term" value="C:cytoplasm"/>
    <property type="evidence" value="ECO:0007669"/>
    <property type="project" value="UniProtKB-SubCell"/>
</dbReference>
<dbReference type="GO" id="GO:0005524">
    <property type="term" value="F:ATP binding"/>
    <property type="evidence" value="ECO:0007669"/>
    <property type="project" value="UniProtKB-UniRule"/>
</dbReference>
<dbReference type="GO" id="GO:0000287">
    <property type="term" value="F:magnesium ion binding"/>
    <property type="evidence" value="ECO:0007669"/>
    <property type="project" value="UniProtKB-UniRule"/>
</dbReference>
<dbReference type="GO" id="GO:0004826">
    <property type="term" value="F:phenylalanine-tRNA ligase activity"/>
    <property type="evidence" value="ECO:0007669"/>
    <property type="project" value="UniProtKB-UniRule"/>
</dbReference>
<dbReference type="GO" id="GO:0000049">
    <property type="term" value="F:tRNA binding"/>
    <property type="evidence" value="ECO:0007669"/>
    <property type="project" value="InterPro"/>
</dbReference>
<dbReference type="GO" id="GO:0006432">
    <property type="term" value="P:phenylalanyl-tRNA aminoacylation"/>
    <property type="evidence" value="ECO:0007669"/>
    <property type="project" value="UniProtKB-UniRule"/>
</dbReference>
<dbReference type="CDD" id="cd00496">
    <property type="entry name" value="PheRS_alpha_core"/>
    <property type="match status" value="1"/>
</dbReference>
<dbReference type="FunFam" id="3.30.930.10:FF:000003">
    <property type="entry name" value="Phenylalanine--tRNA ligase alpha subunit"/>
    <property type="match status" value="1"/>
</dbReference>
<dbReference type="Gene3D" id="3.30.930.10">
    <property type="entry name" value="Bira Bifunctional Protein, Domain 2"/>
    <property type="match status" value="1"/>
</dbReference>
<dbReference type="HAMAP" id="MF_00281">
    <property type="entry name" value="Phe_tRNA_synth_alpha1"/>
    <property type="match status" value="1"/>
</dbReference>
<dbReference type="InterPro" id="IPR006195">
    <property type="entry name" value="aa-tRNA-synth_II"/>
</dbReference>
<dbReference type="InterPro" id="IPR045864">
    <property type="entry name" value="aa-tRNA-synth_II/BPL/LPL"/>
</dbReference>
<dbReference type="InterPro" id="IPR004529">
    <property type="entry name" value="Phe-tRNA-synth_IIc_asu"/>
</dbReference>
<dbReference type="InterPro" id="IPR004188">
    <property type="entry name" value="Phe-tRNA_ligase_II_N"/>
</dbReference>
<dbReference type="InterPro" id="IPR022911">
    <property type="entry name" value="Phe_tRNA_ligase_alpha1_bac"/>
</dbReference>
<dbReference type="InterPro" id="IPR002319">
    <property type="entry name" value="Phenylalanyl-tRNA_Synthase"/>
</dbReference>
<dbReference type="InterPro" id="IPR010978">
    <property type="entry name" value="tRNA-bd_arm"/>
</dbReference>
<dbReference type="NCBIfam" id="TIGR00468">
    <property type="entry name" value="pheS"/>
    <property type="match status" value="1"/>
</dbReference>
<dbReference type="PANTHER" id="PTHR11538:SF41">
    <property type="entry name" value="PHENYLALANINE--TRNA LIGASE, MITOCHONDRIAL"/>
    <property type="match status" value="1"/>
</dbReference>
<dbReference type="PANTHER" id="PTHR11538">
    <property type="entry name" value="PHENYLALANYL-TRNA SYNTHETASE"/>
    <property type="match status" value="1"/>
</dbReference>
<dbReference type="Pfam" id="PF02912">
    <property type="entry name" value="Phe_tRNA-synt_N"/>
    <property type="match status" value="1"/>
</dbReference>
<dbReference type="Pfam" id="PF01409">
    <property type="entry name" value="tRNA-synt_2d"/>
    <property type="match status" value="1"/>
</dbReference>
<dbReference type="SUPFAM" id="SSF55681">
    <property type="entry name" value="Class II aaRS and biotin synthetases"/>
    <property type="match status" value="1"/>
</dbReference>
<dbReference type="SUPFAM" id="SSF46589">
    <property type="entry name" value="tRNA-binding arm"/>
    <property type="match status" value="1"/>
</dbReference>
<dbReference type="PROSITE" id="PS50862">
    <property type="entry name" value="AA_TRNA_LIGASE_II"/>
    <property type="match status" value="1"/>
</dbReference>
<sequence length="360" mass="40079">MTALDTLRGKYIEAISSAADEAALEEVRLAALGKKGEISLKMRELGQMSPEERQTTGAALNRLRDEIDASLRARKQGLADAALDARLKTEWLDVTLPGRPRRAGTIHPVSQVMAELTAIFADMGFAVAEGPQVESDWFNFDALNIPPEHPARQEHDTFFMARAEGDDRPPHVLRTHTSPVQIRAMQAQGAPIRVIAPGRVYRMDMDQTHTPMFHQVEGLAIDRDISMANLKWVLEEFCRAFFEVPSVELRFRASHFPFTEPSAEVDIRCSWEGGQLRIGEGDGWLEILGSGMVHPKVLAAAGVNPDEWQGFAFGMGIDRIAMLKYGIPDLRAFFESDLRWLRHYGFAALDMPDLAGGLSR</sequence>
<name>SYFA_CERS4</name>
<accession>Q3J5M4</accession>
<evidence type="ECO:0000255" key="1">
    <source>
        <dbReference type="HAMAP-Rule" id="MF_00281"/>
    </source>
</evidence>
<keyword id="KW-0030">Aminoacyl-tRNA synthetase</keyword>
<keyword id="KW-0067">ATP-binding</keyword>
<keyword id="KW-0963">Cytoplasm</keyword>
<keyword id="KW-0436">Ligase</keyword>
<keyword id="KW-0460">Magnesium</keyword>
<keyword id="KW-0479">Metal-binding</keyword>
<keyword id="KW-0547">Nucleotide-binding</keyword>
<keyword id="KW-0648">Protein biosynthesis</keyword>
<keyword id="KW-1185">Reference proteome</keyword>
<protein>
    <recommendedName>
        <fullName evidence="1">Phenylalanine--tRNA ligase alpha subunit</fullName>
        <ecNumber evidence="1">6.1.1.20</ecNumber>
    </recommendedName>
    <alternativeName>
        <fullName evidence="1">Phenylalanyl-tRNA synthetase alpha subunit</fullName>
        <shortName evidence="1">PheRS</shortName>
    </alternativeName>
</protein>
<reference key="1">
    <citation type="submission" date="2005-09" db="EMBL/GenBank/DDBJ databases">
        <title>Complete sequence of chromosome 1 of Rhodobacter sphaeroides 2.4.1.</title>
        <authorList>
            <person name="Copeland A."/>
            <person name="Lucas S."/>
            <person name="Lapidus A."/>
            <person name="Barry K."/>
            <person name="Detter J.C."/>
            <person name="Glavina T."/>
            <person name="Hammon N."/>
            <person name="Israni S."/>
            <person name="Pitluck S."/>
            <person name="Richardson P."/>
            <person name="Mackenzie C."/>
            <person name="Choudhary M."/>
            <person name="Larimer F."/>
            <person name="Hauser L.J."/>
            <person name="Land M."/>
            <person name="Donohue T.J."/>
            <person name="Kaplan S."/>
        </authorList>
    </citation>
    <scope>NUCLEOTIDE SEQUENCE [LARGE SCALE GENOMIC DNA]</scope>
    <source>
        <strain>ATCC 17023 / DSM 158 / JCM 6121 / CCUG 31486 / LMG 2827 / NBRC 12203 / NCIMB 8253 / ATH 2.4.1.</strain>
    </source>
</reference>
<proteinExistence type="inferred from homology"/>
<comment type="catalytic activity">
    <reaction evidence="1">
        <text>tRNA(Phe) + L-phenylalanine + ATP = L-phenylalanyl-tRNA(Phe) + AMP + diphosphate + H(+)</text>
        <dbReference type="Rhea" id="RHEA:19413"/>
        <dbReference type="Rhea" id="RHEA-COMP:9668"/>
        <dbReference type="Rhea" id="RHEA-COMP:9699"/>
        <dbReference type="ChEBI" id="CHEBI:15378"/>
        <dbReference type="ChEBI" id="CHEBI:30616"/>
        <dbReference type="ChEBI" id="CHEBI:33019"/>
        <dbReference type="ChEBI" id="CHEBI:58095"/>
        <dbReference type="ChEBI" id="CHEBI:78442"/>
        <dbReference type="ChEBI" id="CHEBI:78531"/>
        <dbReference type="ChEBI" id="CHEBI:456215"/>
        <dbReference type="EC" id="6.1.1.20"/>
    </reaction>
</comment>
<comment type="cofactor">
    <cofactor evidence="1">
        <name>Mg(2+)</name>
        <dbReference type="ChEBI" id="CHEBI:18420"/>
    </cofactor>
    <text evidence="1">Binds 2 magnesium ions per tetramer.</text>
</comment>
<comment type="subunit">
    <text evidence="1">Tetramer of two alpha and two beta subunits.</text>
</comment>
<comment type="subcellular location">
    <subcellularLocation>
        <location evidence="1">Cytoplasm</location>
    </subcellularLocation>
</comment>
<comment type="similarity">
    <text evidence="1">Belongs to the class-II aminoacyl-tRNA synthetase family. Phe-tRNA synthetase alpha subunit type 1 subfamily.</text>
</comment>